<reference key="1">
    <citation type="journal article" date="2004" name="Biochim. Biophys. Acta">
        <title>Respiratory nitrate reductase from haloarchaeon Haloferax mediterranei: biochemical and genetic analysis.</title>
        <authorList>
            <person name="Lledo B."/>
            <person name="Martinez-Espinosa R.M."/>
            <person name="Marhuenda-Egea F.C."/>
            <person name="Bonete M.J."/>
        </authorList>
    </citation>
    <scope>NUCLEOTIDE SEQUENCE [GENOMIC DNA]</scope>
    <scope>FUNCTION</scope>
    <scope>CATALYTIC ACTIVITY</scope>
    <scope>ACTIVITY REGULATION</scope>
    <scope>SUBUNIT</scope>
    <scope>INDUCTION</scope>
    <scope>SUBCELLULAR LOCATION</scope>
    <scope>BIOPHYSICOCHEMICAL PROPERTIES</scope>
    <source>
        <strain>ATCC 33500 / DSM 1411 / JCM 8866 / NBRC 14739 / NCIMB 2177 / R-4</strain>
    </source>
</reference>
<reference key="2">
    <citation type="journal article" date="2012" name="J. Bacteriol.">
        <title>Complete genome sequence of the metabolically versatile halophilic archaeon Haloferax mediterranei, a poly(3-hydroxybutyrate-co-3-hydroxyvalerate) producer.</title>
        <authorList>
            <person name="Han J."/>
            <person name="Zhang F."/>
            <person name="Hou J."/>
            <person name="Liu X."/>
            <person name="Li M."/>
            <person name="Liu H."/>
            <person name="Cai L."/>
            <person name="Zhang B."/>
            <person name="Chen Y."/>
            <person name="Zhou J."/>
            <person name="Hu S."/>
            <person name="Xiang H."/>
        </authorList>
    </citation>
    <scope>NUCLEOTIDE SEQUENCE [LARGE SCALE GENOMIC DNA]</scope>
    <source>
        <strain>ATCC 33500 / DSM 1411 / JCM 8866 / NBRC 14739 / NCIMB 2177 / R-4</strain>
    </source>
</reference>
<reference key="3">
    <citation type="journal article" date="2014" name="PLoS Genet.">
        <title>Phylogenetically driven sequencing of extremely halophilic archaea reveals strategies for static and dynamic osmo-response.</title>
        <authorList>
            <person name="Becker E.A."/>
            <person name="Seitzer P.M."/>
            <person name="Tritt A."/>
            <person name="Larsen D."/>
            <person name="Krusor M."/>
            <person name="Yao A.I."/>
            <person name="Wu D."/>
            <person name="Madern D."/>
            <person name="Eisen J.A."/>
            <person name="Darling A.E."/>
            <person name="Facciotti M.T."/>
        </authorList>
    </citation>
    <scope>NUCLEOTIDE SEQUENCE [LARGE SCALE GENOMIC DNA]</scope>
    <source>
        <strain>ATCC 33500 / DSM 1411 / JCM 8866 / NBRC 14739 / NCIMB 2177 / R-4</strain>
    </source>
</reference>
<reference key="4">
    <citation type="journal article" date="2007" name="FEMS Microbiol. Lett.">
        <title>Look on the positive side! The orientation, identification and bioenergetics of 'Archaeal' membrane-bound nitrate reductases.</title>
        <authorList>
            <person name="Martinez-Espinosa R.M."/>
            <person name="Dridge E.J."/>
            <person name="Bonete M.J."/>
            <person name="Butt J.N."/>
            <person name="Butler C.S."/>
            <person name="Sargent F."/>
            <person name="Richardson D.J."/>
        </authorList>
    </citation>
    <scope>ACTIVITY REGULATION</scope>
    <scope>SUBCELLULAR LOCATION</scope>
    <scope>SUBUNIT</scope>
    <scope>PUTATIVE REACTION MECHANISM</scope>
</reference>
<evidence type="ECO:0000250" key="1"/>
<evidence type="ECO:0000255" key="2"/>
<evidence type="ECO:0000255" key="3">
    <source>
        <dbReference type="PROSITE-ProRule" id="PRU01004"/>
    </source>
</evidence>
<evidence type="ECO:0000256" key="4">
    <source>
        <dbReference type="SAM" id="MobiDB-lite"/>
    </source>
</evidence>
<evidence type="ECO:0000269" key="5">
    <source>
    </source>
</evidence>
<evidence type="ECO:0000269" key="6">
    <source>
    </source>
</evidence>
<evidence type="ECO:0000305" key="7"/>
<evidence type="ECO:0000305" key="8">
    <source>
    </source>
</evidence>
<evidence type="ECO:0000305" key="9">
    <source>
    </source>
</evidence>
<feature type="signal peptide" description="Tat-type signal" evidence="2">
    <location>
        <begin position="1"/>
        <end status="unknown"/>
    </location>
</feature>
<feature type="chain" id="PRO_0000428886" description="Respiratory nitrate reductase subunit alpha">
    <location>
        <begin status="unknown"/>
        <end position="984"/>
    </location>
</feature>
<feature type="domain" description="4Fe-4S Mo/W bis-MGD-type" evidence="3">
    <location>
        <begin position="103"/>
        <end position="167"/>
    </location>
</feature>
<feature type="region of interest" description="Disordered" evidence="4">
    <location>
        <begin position="1"/>
        <end position="43"/>
    </location>
</feature>
<feature type="compositionally biased region" description="Acidic residues" evidence="4">
    <location>
        <begin position="8"/>
        <end position="24"/>
    </location>
</feature>
<feature type="binding site" evidence="3">
    <location>
        <position position="110"/>
    </location>
    <ligand>
        <name>[4Fe-4S] cluster</name>
        <dbReference type="ChEBI" id="CHEBI:49883"/>
    </ligand>
</feature>
<feature type="binding site" evidence="3">
    <location>
        <position position="114"/>
    </location>
    <ligand>
        <name>[4Fe-4S] cluster</name>
        <dbReference type="ChEBI" id="CHEBI:49883"/>
    </ligand>
</feature>
<feature type="binding site" evidence="3">
    <location>
        <position position="118"/>
    </location>
    <ligand>
        <name>[4Fe-4S] cluster</name>
        <dbReference type="ChEBI" id="CHEBI:49883"/>
    </ligand>
</feature>
<feature type="binding site" evidence="3">
    <location>
        <position position="153"/>
    </location>
    <ligand>
        <name>[4Fe-4S] cluster</name>
        <dbReference type="ChEBI" id="CHEBI:49883"/>
    </ligand>
</feature>
<feature type="binding site" evidence="1">
    <location>
        <position position="249"/>
    </location>
    <ligand>
        <name>Mo-bis(molybdopterin guanine dinucleotide)</name>
        <dbReference type="ChEBI" id="CHEBI:60539"/>
    </ligand>
    <ligandPart>
        <name>Mo</name>
        <dbReference type="ChEBI" id="CHEBI:28685"/>
    </ligandPart>
</feature>
<feature type="sequence conflict" description="In Ref. 1; CAF21906." evidence="7" ref="1">
    <original>SN</original>
    <variation>VE</variation>
    <location>
        <begin position="281"/>
        <end position="282"/>
    </location>
</feature>
<feature type="sequence conflict" description="In Ref. 1; CAF21906." evidence="7" ref="1">
    <original>TTVQTQ</original>
    <variation>QRSNP</variation>
    <location>
        <begin position="429"/>
        <end position="434"/>
    </location>
</feature>
<feature type="sequence conflict" description="In Ref. 1; CAF21906." evidence="7" ref="1">
    <original>NTD</original>
    <variation>TPN</variation>
    <location>
        <begin position="564"/>
        <end position="566"/>
    </location>
</feature>
<feature type="sequence conflict" description="In Ref. 1; CAF21906." evidence="7" ref="1">
    <original>W</original>
    <variation>R</variation>
    <location>
        <position position="603"/>
    </location>
</feature>
<feature type="sequence conflict" description="In Ref. 1; CAF21906." evidence="7" ref="1">
    <original>Q</original>
    <variation>L</variation>
    <location>
        <position position="694"/>
    </location>
</feature>
<feature type="sequence conflict" description="In Ref. 1; CAF21906." evidence="7" ref="1">
    <original>K</original>
    <variation>R</variation>
    <location>
        <position position="709"/>
    </location>
</feature>
<feature type="sequence conflict" description="In Ref. 1; CAF21906." evidence="7" ref="1">
    <original>P</original>
    <variation>S</variation>
    <location>
        <position position="833"/>
    </location>
</feature>
<name>NARG_HALMT</name>
<keyword id="KW-0004">4Fe-4S</keyword>
<keyword id="KW-1003">Cell membrane</keyword>
<keyword id="KW-0249">Electron transport</keyword>
<keyword id="KW-0408">Iron</keyword>
<keyword id="KW-0411">Iron-sulfur</keyword>
<keyword id="KW-0472">Membrane</keyword>
<keyword id="KW-0479">Metal-binding</keyword>
<keyword id="KW-0500">Molybdenum</keyword>
<keyword id="KW-0534">Nitrate assimilation</keyword>
<keyword id="KW-0560">Oxidoreductase</keyword>
<keyword id="KW-0614">Plasmid</keyword>
<keyword id="KW-0732">Signal</keyword>
<keyword id="KW-0813">Transport</keyword>
<comment type="function">
    <text evidence="5">The respiratory membrane-bound nitrate reductase enzyme complex plays a role in generation of metabolic energy by using nitrate as a terminal electron acceptor during anaerobic conditions. The alpha chain is the actual site of nitrate reduction.</text>
</comment>
<comment type="catalytic activity">
    <reaction evidence="5">
        <text>nitrate + a quinol = a quinone + nitrite + H2O</text>
        <dbReference type="Rhea" id="RHEA:56144"/>
        <dbReference type="ChEBI" id="CHEBI:15377"/>
        <dbReference type="ChEBI" id="CHEBI:16301"/>
        <dbReference type="ChEBI" id="CHEBI:17632"/>
        <dbReference type="ChEBI" id="CHEBI:24646"/>
        <dbReference type="ChEBI" id="CHEBI:132124"/>
        <dbReference type="EC" id="1.7.5.1"/>
    </reaction>
</comment>
<comment type="cofactor">
    <cofactor evidence="1">
        <name>[4Fe-4S] cluster</name>
        <dbReference type="ChEBI" id="CHEBI:49883"/>
    </cofactor>
    <text evidence="1">Binds 1 [4Fe-4S] cluster per subunit.</text>
</comment>
<comment type="cofactor">
    <cofactor evidence="1">
        <name>Mo-bis(molybdopterin guanine dinucleotide)</name>
        <dbReference type="ChEBI" id="CHEBI:60539"/>
    </cofactor>
    <text evidence="1">Binds 1 molybdenum-bis(molybdopterin guanine dinucleotide) (Mo-bis-MGD) cofactor per subunit.</text>
</comment>
<comment type="activity regulation">
    <text evidence="5 6">Inhibited by cyanide, azide and antimycin A. Enzyme stability is not dependent on salt concentration.</text>
</comment>
<comment type="biophysicochemical properties">
    <kinetics>
        <KM evidence="5">0.82 mM for nitrate</KM>
        <KM evidence="5">0.25 mM for methyl viologen</KM>
        <text>Characterized with purified enzyme corresponding to a dimer of NarG and NarH.</text>
    </kinetics>
    <phDependence>
        <text evidence="5">Optimum pH is 8.2. At 40 degrees Celsius (temperature of natural environment) the optimum pH is 7.9.</text>
    </phDependence>
    <temperatureDependence>
        <text evidence="5">Optimum temperature is 70 degrees Celsius.</text>
    </temperatureDependence>
</comment>
<comment type="subunit">
    <text evidence="5 6">Probable multiprotein complex; a catalytic heterodimer of an alpha and beta chain is proposed to associate with additional subunits involved in membrane attachment and electron transfer.</text>
</comment>
<comment type="subcellular location">
    <subcellularLocation>
        <location evidence="8 9">Cell membrane</location>
        <topology evidence="5 6">Peripheral membrane protein</topology>
        <orientation evidence="5 6">Extracellular side</orientation>
    </subcellularLocation>
</comment>
<comment type="induction">
    <text evidence="5">By nitrate.</text>
</comment>
<comment type="PTM">
    <text evidence="6">Exported by the Tat system.</text>
</comment>
<comment type="similarity">
    <text evidence="7">Belongs to the prokaryotic molybdopterin-containing oxidoreductase family.</text>
</comment>
<dbReference type="EC" id="1.7.5.1" evidence="5"/>
<dbReference type="EMBL" id="AJ621880">
    <property type="protein sequence ID" value="CAF21906.1"/>
    <property type="molecule type" value="Genomic_DNA"/>
</dbReference>
<dbReference type="EMBL" id="CP001870">
    <property type="protein sequence ID" value="AFK20939.1"/>
    <property type="molecule type" value="Genomic_DNA"/>
</dbReference>
<dbReference type="EMBL" id="AOLO01000001">
    <property type="protein sequence ID" value="EMA05271.1"/>
    <property type="molecule type" value="Genomic_DNA"/>
</dbReference>
<dbReference type="RefSeq" id="WP_004056332.1">
    <property type="nucleotide sequence ID" value="NC_017943.1"/>
</dbReference>
<dbReference type="SMR" id="I3R9M9"/>
<dbReference type="GeneID" id="40158240"/>
<dbReference type="KEGG" id="hme:HFX_5104"/>
<dbReference type="HOGENOM" id="CLU_000422_13_3_2"/>
<dbReference type="OrthoDB" id="23466at2157"/>
<dbReference type="BRENDA" id="1.7.7.2">
    <property type="organism ID" value="2566"/>
</dbReference>
<dbReference type="BRENDA" id="1.97.1.1">
    <property type="organism ID" value="2566"/>
</dbReference>
<dbReference type="Proteomes" id="UP000006469">
    <property type="component" value="Plasmid pHM300"/>
</dbReference>
<dbReference type="Proteomes" id="UP000011603">
    <property type="component" value="Unassembled WGS sequence"/>
</dbReference>
<dbReference type="GO" id="GO:0005886">
    <property type="term" value="C:plasma membrane"/>
    <property type="evidence" value="ECO:0007669"/>
    <property type="project" value="UniProtKB-SubCell"/>
</dbReference>
<dbReference type="GO" id="GO:0051539">
    <property type="term" value="F:4 iron, 4 sulfur cluster binding"/>
    <property type="evidence" value="ECO:0007669"/>
    <property type="project" value="UniProtKB-KW"/>
</dbReference>
<dbReference type="GO" id="GO:0046872">
    <property type="term" value="F:metal ion binding"/>
    <property type="evidence" value="ECO:0007669"/>
    <property type="project" value="UniProtKB-KW"/>
</dbReference>
<dbReference type="GO" id="GO:0043546">
    <property type="term" value="F:molybdopterin cofactor binding"/>
    <property type="evidence" value="ECO:0007669"/>
    <property type="project" value="InterPro"/>
</dbReference>
<dbReference type="GO" id="GO:0160182">
    <property type="term" value="F:nitrate reductase (quinone) activity"/>
    <property type="evidence" value="ECO:0007669"/>
    <property type="project" value="UniProtKB-EC"/>
</dbReference>
<dbReference type="GO" id="GO:0042128">
    <property type="term" value="P:nitrate assimilation"/>
    <property type="evidence" value="ECO:0007669"/>
    <property type="project" value="UniProtKB-KW"/>
</dbReference>
<dbReference type="CDD" id="cd02776">
    <property type="entry name" value="MopB_CT_Nitrate-R-NarG-like"/>
    <property type="match status" value="1"/>
</dbReference>
<dbReference type="CDD" id="cd02750">
    <property type="entry name" value="MopB_Nitrate-R-NarG-like"/>
    <property type="match status" value="1"/>
</dbReference>
<dbReference type="Gene3D" id="3.40.50.12440">
    <property type="match status" value="5"/>
</dbReference>
<dbReference type="InterPro" id="IPR009010">
    <property type="entry name" value="Asp_de-COase-like_dom_sf"/>
</dbReference>
<dbReference type="InterPro" id="IPR017840">
    <property type="entry name" value="DMSO_Rdtase_II_Mopterin_su"/>
</dbReference>
<dbReference type="InterPro" id="IPR037943">
    <property type="entry name" value="MopB_CT_Nitrate-R-NarG-like"/>
</dbReference>
<dbReference type="InterPro" id="IPR006657">
    <property type="entry name" value="MoPterin_dinucl-bd_dom"/>
</dbReference>
<dbReference type="InterPro" id="IPR006656">
    <property type="entry name" value="Mopterin_OxRdtase"/>
</dbReference>
<dbReference type="InterPro" id="IPR006963">
    <property type="entry name" value="Mopterin_OxRdtase_4Fe-4S_dom"/>
</dbReference>
<dbReference type="InterPro" id="IPR027467">
    <property type="entry name" value="MopterinOxRdtase_cofactor_BS"/>
</dbReference>
<dbReference type="InterPro" id="IPR050123">
    <property type="entry name" value="Prok_molybdopt-oxidoreductase"/>
</dbReference>
<dbReference type="NCBIfam" id="TIGR03479">
    <property type="entry name" value="DMSO_red_II_alp"/>
    <property type="match status" value="1"/>
</dbReference>
<dbReference type="PANTHER" id="PTHR43105">
    <property type="entry name" value="RESPIRATORY NITRATE REDUCTASE"/>
    <property type="match status" value="1"/>
</dbReference>
<dbReference type="PANTHER" id="PTHR43105:SF2">
    <property type="entry name" value="RESPIRATORY NITRATE REDUCTASE 2 ALPHA CHAIN"/>
    <property type="match status" value="1"/>
</dbReference>
<dbReference type="Pfam" id="PF00384">
    <property type="entry name" value="Molybdopterin"/>
    <property type="match status" value="1"/>
</dbReference>
<dbReference type="Pfam" id="PF01568">
    <property type="entry name" value="Molydop_binding"/>
    <property type="match status" value="1"/>
</dbReference>
<dbReference type="SMART" id="SM00926">
    <property type="entry name" value="Molybdop_Fe4S4"/>
    <property type="match status" value="1"/>
</dbReference>
<dbReference type="SUPFAM" id="SSF50692">
    <property type="entry name" value="ADC-like"/>
    <property type="match status" value="1"/>
</dbReference>
<dbReference type="SUPFAM" id="SSF53706">
    <property type="entry name" value="Formate dehydrogenase/DMSO reductase, domains 1-3"/>
    <property type="match status" value="1"/>
</dbReference>
<dbReference type="PROSITE" id="PS51669">
    <property type="entry name" value="4FE4S_MOW_BIS_MGD"/>
    <property type="match status" value="1"/>
</dbReference>
<dbReference type="PROSITE" id="PS00551">
    <property type="entry name" value="MOLYBDOPTERIN_PROK_1"/>
    <property type="match status" value="1"/>
</dbReference>
<protein>
    <recommendedName>
        <fullName>Respiratory nitrate reductase subunit alpha</fullName>
        <ecNumber evidence="5">1.7.5.1</ecNumber>
    </recommendedName>
    <alternativeName>
        <fullName>Nitrate reductase alpha chain</fullName>
    </alternativeName>
</protein>
<gene>
    <name type="primary">narG</name>
    <name type="ordered locus">HFX_5104</name>
    <name type="ORF">C439_00690</name>
</gene>
<sequence>MSRNDASQLDDGETTAESPPDDQANDAPEVGDPPGDPVDADSGVSRRTFLEGIGVASLLGIGTSAASDDSLFQMGGLKPVDDPIGNYPYRDWEDLYREKWDWDSVSRSTHSVNCTGSCSWNVYVKNGQVWREEQSGDYPRFDESLPDPNPRGCQKGACYTDYVNADQRIKHPLKRVGERGEGKWKRISWDEALTEIAEHVVDEVEAGRYDAISGFTPIPAMSPVSFASGSRLVNLLGGVSHSFYDWYSDLPPGQPITWGTQTDNAESADWYNADYIIAWGSNINVTRIPDAKYFLESGYNGTKRVGVFTDYSQTAIHTDEWLSPDSGTDTALALGMAQTIVDEGLYDEAHLKEQTDMPLLVRQDTGKFLRASDVPSVNTDADRPEWMLLMLDSNGRIREAPGSLGERDGQKDYSKSIELDFDPQLDGETTVQTQSGRVQVRTVWAELRDELANWDPEMVHEETTVGKETYQRIAREFAEADKAKIIQGKGVNDWYHNDLGNRALQLLVTLTGNLGEQGTGLDHYVGQEKIWTFHGWKTLSFPTGKVRGVPTTLWTYYHAGILDNTDPDTAAKIRESIDKGWMPVYPEERDNGSRPDPTTMFVWRGNYFNQAKGNVAVEEQLWPKLDLVVDINFRMDSTAMYSDIVLPTASHYEKHDLSMTDMHTYVHPFTPAVEPLGESKTDWQIFRELAQKIQEVATERGVEPISDRKFDREIDLQSVYDDYVRDWETGEEGALAEDRAACEYILEHSEESNPADSDEQITFADTVEQPQRLLEAGDHWTSDIEDGEAYAPWKDFVQDKNPWPTVTGRQQYYIDHDWFLELGEELPTHKEGPENTGGDYPMEYNTPHGRWAIHSTWRDSEKLLRLQRGEPLLYLHPEDAEERGIEDGDSVEVFNDLAEVELQAKIYPSSQRGTARMYFAWERFQFDSDSNFNSLVPMYMKPTQLVQYPEDSGEHLHFFPNYWGPTGVNSDVRVDVRKAGGGDE</sequence>
<proteinExistence type="evidence at protein level"/>
<organism>
    <name type="scientific">Haloferax mediterranei (strain ATCC 33500 / DSM 1411 / JCM 8866 / NBRC 14739 / NCIMB 2177 / R-4)</name>
    <name type="common">Halobacterium mediterranei</name>
    <dbReference type="NCBI Taxonomy" id="523841"/>
    <lineage>
        <taxon>Archaea</taxon>
        <taxon>Methanobacteriati</taxon>
        <taxon>Methanobacteriota</taxon>
        <taxon>Stenosarchaea group</taxon>
        <taxon>Halobacteria</taxon>
        <taxon>Halobacteriales</taxon>
        <taxon>Haloferacaceae</taxon>
        <taxon>Haloferax</taxon>
    </lineage>
</organism>
<geneLocation type="plasmid">
    <name>pHM300</name>
</geneLocation>
<accession>I3R9M9</accession>
<accession>Q703H6</accession>